<dbReference type="EMBL" id="BT097011">
    <property type="protein sequence ID" value="ACU21195.1"/>
    <property type="molecule type" value="mRNA"/>
</dbReference>
<dbReference type="RefSeq" id="NP_001242085.1">
    <property type="nucleotide sequence ID" value="NM_001255156.1"/>
</dbReference>
<dbReference type="SMR" id="C6TH93"/>
<dbReference type="FunCoup" id="C6TH93">
    <property type="interactions" value="571"/>
</dbReference>
<dbReference type="STRING" id="3847.C6TH93"/>
<dbReference type="PaxDb" id="3847-GLYMA02G36140.1"/>
<dbReference type="GeneID" id="100775221"/>
<dbReference type="KEGG" id="gmx:100775221"/>
<dbReference type="eggNOG" id="ENOG502RJHP">
    <property type="taxonomic scope" value="Eukaryota"/>
</dbReference>
<dbReference type="InParanoid" id="C6TH93"/>
<dbReference type="OrthoDB" id="753675at2759"/>
<dbReference type="Proteomes" id="UP000008827">
    <property type="component" value="Unplaced"/>
</dbReference>
<dbReference type="GO" id="GO:0048226">
    <property type="term" value="C:Casparian strip"/>
    <property type="evidence" value="ECO:0000318"/>
    <property type="project" value="GO_Central"/>
</dbReference>
<dbReference type="GO" id="GO:0005886">
    <property type="term" value="C:plasma membrane"/>
    <property type="evidence" value="ECO:0000318"/>
    <property type="project" value="GO_Central"/>
</dbReference>
<dbReference type="GO" id="GO:0042545">
    <property type="term" value="P:cell wall modification"/>
    <property type="evidence" value="ECO:0000318"/>
    <property type="project" value="GO_Central"/>
</dbReference>
<dbReference type="GO" id="GO:0007043">
    <property type="term" value="P:cell-cell junction assembly"/>
    <property type="evidence" value="ECO:0000318"/>
    <property type="project" value="GO_Central"/>
</dbReference>
<dbReference type="Gene3D" id="1.20.190.20">
    <property type="entry name" value="14-3-3 domain"/>
    <property type="match status" value="1"/>
</dbReference>
<dbReference type="InterPro" id="IPR036815">
    <property type="entry name" value="14-3-3_dom_sf"/>
</dbReference>
<dbReference type="InterPro" id="IPR006459">
    <property type="entry name" value="CASP/CASPL"/>
</dbReference>
<dbReference type="InterPro" id="IPR006702">
    <property type="entry name" value="CASP_dom"/>
</dbReference>
<dbReference type="InterPro" id="IPR044173">
    <property type="entry name" value="CASPL"/>
</dbReference>
<dbReference type="NCBIfam" id="TIGR01569">
    <property type="entry name" value="A_tha_TIGR01569"/>
    <property type="match status" value="1"/>
</dbReference>
<dbReference type="PANTHER" id="PTHR36488:SF11">
    <property type="entry name" value="CASP-LIKE PROTEIN"/>
    <property type="match status" value="1"/>
</dbReference>
<dbReference type="PANTHER" id="PTHR36488">
    <property type="entry name" value="CASP-LIKE PROTEIN 1U1"/>
    <property type="match status" value="1"/>
</dbReference>
<dbReference type="Pfam" id="PF04535">
    <property type="entry name" value="CASP_dom"/>
    <property type="match status" value="1"/>
</dbReference>
<dbReference type="SUPFAM" id="SSF48445">
    <property type="entry name" value="14-3-3 protein"/>
    <property type="match status" value="1"/>
</dbReference>
<name>CASP4_SOYBN</name>
<evidence type="ECO:0000250" key="1"/>
<evidence type="ECO:0000255" key="2"/>
<evidence type="ECO:0000305" key="3"/>
<protein>
    <recommendedName>
        <fullName>Casparian strip membrane protein 4</fullName>
        <shortName>GmCASP4</shortName>
    </recommendedName>
</protein>
<accession>C6TH93</accession>
<feature type="chain" id="PRO_0000391528" description="Casparian strip membrane protein 4">
    <location>
        <begin position="1"/>
        <end position="210"/>
    </location>
</feature>
<feature type="topological domain" description="Cytoplasmic" evidence="2">
    <location>
        <begin position="1"/>
        <end position="48"/>
    </location>
</feature>
<feature type="transmembrane region" description="Helical" evidence="2">
    <location>
        <begin position="49"/>
        <end position="69"/>
    </location>
</feature>
<feature type="topological domain" description="Extracellular" evidence="2">
    <location>
        <begin position="70"/>
        <end position="98"/>
    </location>
</feature>
<feature type="transmembrane region" description="Helical" evidence="2">
    <location>
        <begin position="99"/>
        <end position="119"/>
    </location>
</feature>
<feature type="topological domain" description="Cytoplasmic" evidence="2">
    <location>
        <begin position="120"/>
        <end position="131"/>
    </location>
</feature>
<feature type="transmembrane region" description="Helical" evidence="2">
    <location>
        <begin position="132"/>
        <end position="152"/>
    </location>
</feature>
<feature type="topological domain" description="Extracellular" evidence="2">
    <location>
        <begin position="153"/>
        <end position="184"/>
    </location>
</feature>
<feature type="transmembrane region" description="Helical" evidence="2">
    <location>
        <begin position="185"/>
        <end position="205"/>
    </location>
</feature>
<feature type="topological domain" description="Cytoplasmic" evidence="2">
    <location>
        <begin position="206"/>
        <end position="210"/>
    </location>
</feature>
<keyword id="KW-1003">Cell membrane</keyword>
<keyword id="KW-0961">Cell wall biogenesis/degradation</keyword>
<keyword id="KW-0472">Membrane</keyword>
<keyword id="KW-1185">Reference proteome</keyword>
<keyword id="KW-0812">Transmembrane</keyword>
<keyword id="KW-1133">Transmembrane helix</keyword>
<organism>
    <name type="scientific">Glycine max</name>
    <name type="common">Soybean</name>
    <name type="synonym">Glycine hispida</name>
    <dbReference type="NCBI Taxonomy" id="3847"/>
    <lineage>
        <taxon>Eukaryota</taxon>
        <taxon>Viridiplantae</taxon>
        <taxon>Streptophyta</taxon>
        <taxon>Embryophyta</taxon>
        <taxon>Tracheophyta</taxon>
        <taxon>Spermatophyta</taxon>
        <taxon>Magnoliopsida</taxon>
        <taxon>eudicotyledons</taxon>
        <taxon>Gunneridae</taxon>
        <taxon>Pentapetalae</taxon>
        <taxon>rosids</taxon>
        <taxon>fabids</taxon>
        <taxon>Fabales</taxon>
        <taxon>Fabaceae</taxon>
        <taxon>Papilionoideae</taxon>
        <taxon>50 kb inversion clade</taxon>
        <taxon>NPAAA clade</taxon>
        <taxon>indigoferoid/millettioid clade</taxon>
        <taxon>Phaseoleae</taxon>
        <taxon>Glycine</taxon>
        <taxon>Glycine subgen. Soja</taxon>
    </lineage>
</organism>
<sequence length="210" mass="22933">MAASKDRENFVYIAKLAEQAERYEEMVESMKNVANLDVELTVEERKKGVAILDFILRLGAITSALGAAATMATSDETLPFFTQFFQFEASYDSFSTFQFFVIAMAFVGGYLVLSLPFSIVTIIRPHAAGPRLFLIILDTVFLTLATSSAAAATAIVYLAHNGNQDSNWLAICNQFGDFCQEISGAVVASFVAVVLFVLLIVMCAVALRNH</sequence>
<proteinExistence type="evidence at transcript level"/>
<reference key="1">
    <citation type="submission" date="2009-08" db="EMBL/GenBank/DDBJ databases">
        <authorList>
            <person name="Cheung F."/>
            <person name="Xiao Y."/>
            <person name="Chan A."/>
            <person name="Moskal W."/>
            <person name="Town C.D."/>
        </authorList>
    </citation>
    <scope>NUCLEOTIDE SEQUENCE [LARGE SCALE MRNA]</scope>
</reference>
<reference key="2">
    <citation type="journal article" date="2014" name="Plant Physiol.">
        <title>Functional and evolutionary analysis of the CASPARIAN STRIP MEMBRANE DOMAIN PROTEIN family.</title>
        <authorList>
            <person name="Roppolo D."/>
            <person name="Boeckmann B."/>
            <person name="Pfister A."/>
            <person name="Boutet E."/>
            <person name="Rubio M.C."/>
            <person name="Denervaud-Tendon V."/>
            <person name="Vermeer J.E."/>
            <person name="Gheyselinck J."/>
            <person name="Xenarios I."/>
            <person name="Geldner N."/>
        </authorList>
    </citation>
    <scope>GENE FAMILY</scope>
    <scope>NOMENCLATURE</scope>
</reference>
<comment type="function">
    <text evidence="1">Regulates membrane-cell wall junctions and localized cell wall deposition. Required for establishment of the Casparian strip membrane domain (CSD) and the subsequent formation of Casparian strips, a cell wall modification of the root endodermis that determines an apoplastic barrier between the intraorganismal apoplasm and the extraorganismal apoplasm and prevents lateral diffusion (By similarity).</text>
</comment>
<comment type="subunit">
    <text evidence="1">Homodimer and heterodimers.</text>
</comment>
<comment type="subcellular location">
    <subcellularLocation>
        <location evidence="1">Cell membrane</location>
        <topology evidence="1">Multi-pass membrane protein</topology>
    </subcellularLocation>
    <text evidence="1">Very restricted localization following a belt shape within the plasma membrane which coincides with the position of the Casparian strip membrane domain in the root endodermis.</text>
</comment>
<comment type="similarity">
    <text evidence="3">Belongs to the Casparian strip membrane proteins (CASP) family.</text>
</comment>